<protein>
    <recommendedName>
        <fullName evidence="1">tRNA N6-adenosine threonylcarbamoyltransferase</fullName>
        <ecNumber evidence="1">2.3.1.234</ecNumber>
    </recommendedName>
    <alternativeName>
        <fullName evidence="1">N6-L-threonylcarbamoyladenine synthase</fullName>
        <shortName evidence="1">t(6)A synthase</shortName>
    </alternativeName>
    <alternativeName>
        <fullName evidence="1">t(6)A37 threonylcarbamoyladenosine biosynthesis protein TsaD</fullName>
    </alternativeName>
    <alternativeName>
        <fullName evidence="1">tRNA threonylcarbamoyladenosine biosynthesis protein TsaD</fullName>
    </alternativeName>
</protein>
<name>TSAD_SHESH</name>
<comment type="function">
    <text evidence="1">Required for the formation of a threonylcarbamoyl group on adenosine at position 37 (t(6)A37) in tRNAs that read codons beginning with adenine. Is involved in the transfer of the threonylcarbamoyl moiety of threonylcarbamoyl-AMP (TC-AMP) to the N6 group of A37, together with TsaE and TsaB. TsaD likely plays a direct catalytic role in this reaction.</text>
</comment>
<comment type="catalytic activity">
    <reaction evidence="1">
        <text>L-threonylcarbamoyladenylate + adenosine(37) in tRNA = N(6)-L-threonylcarbamoyladenosine(37) in tRNA + AMP + H(+)</text>
        <dbReference type="Rhea" id="RHEA:37059"/>
        <dbReference type="Rhea" id="RHEA-COMP:10162"/>
        <dbReference type="Rhea" id="RHEA-COMP:10163"/>
        <dbReference type="ChEBI" id="CHEBI:15378"/>
        <dbReference type="ChEBI" id="CHEBI:73682"/>
        <dbReference type="ChEBI" id="CHEBI:74411"/>
        <dbReference type="ChEBI" id="CHEBI:74418"/>
        <dbReference type="ChEBI" id="CHEBI:456215"/>
        <dbReference type="EC" id="2.3.1.234"/>
    </reaction>
</comment>
<comment type="cofactor">
    <cofactor evidence="1">
        <name>Fe(2+)</name>
        <dbReference type="ChEBI" id="CHEBI:29033"/>
    </cofactor>
    <text evidence="1">Binds 1 Fe(2+) ion per subunit.</text>
</comment>
<comment type="subcellular location">
    <subcellularLocation>
        <location evidence="1">Cytoplasm</location>
    </subcellularLocation>
</comment>
<comment type="similarity">
    <text evidence="1">Belongs to the KAE1 / TsaD family.</text>
</comment>
<accession>A8FS64</accession>
<organism>
    <name type="scientific">Shewanella sediminis (strain HAW-EB3)</name>
    <dbReference type="NCBI Taxonomy" id="425104"/>
    <lineage>
        <taxon>Bacteria</taxon>
        <taxon>Pseudomonadati</taxon>
        <taxon>Pseudomonadota</taxon>
        <taxon>Gammaproteobacteria</taxon>
        <taxon>Alteromonadales</taxon>
        <taxon>Shewanellaceae</taxon>
        <taxon>Shewanella</taxon>
    </lineage>
</organism>
<keyword id="KW-0012">Acyltransferase</keyword>
<keyword id="KW-0963">Cytoplasm</keyword>
<keyword id="KW-0408">Iron</keyword>
<keyword id="KW-0479">Metal-binding</keyword>
<keyword id="KW-1185">Reference proteome</keyword>
<keyword id="KW-0808">Transferase</keyword>
<keyword id="KW-0819">tRNA processing</keyword>
<dbReference type="EC" id="2.3.1.234" evidence="1"/>
<dbReference type="EMBL" id="CP000821">
    <property type="protein sequence ID" value="ABV35687.1"/>
    <property type="molecule type" value="Genomic_DNA"/>
</dbReference>
<dbReference type="RefSeq" id="WP_012141423.1">
    <property type="nucleotide sequence ID" value="NC_009831.1"/>
</dbReference>
<dbReference type="SMR" id="A8FS64"/>
<dbReference type="STRING" id="425104.Ssed_1076"/>
<dbReference type="KEGG" id="sse:Ssed_1076"/>
<dbReference type="eggNOG" id="COG0533">
    <property type="taxonomic scope" value="Bacteria"/>
</dbReference>
<dbReference type="HOGENOM" id="CLU_023208_0_0_6"/>
<dbReference type="OrthoDB" id="9806197at2"/>
<dbReference type="Proteomes" id="UP000002015">
    <property type="component" value="Chromosome"/>
</dbReference>
<dbReference type="GO" id="GO:0005737">
    <property type="term" value="C:cytoplasm"/>
    <property type="evidence" value="ECO:0007669"/>
    <property type="project" value="UniProtKB-SubCell"/>
</dbReference>
<dbReference type="GO" id="GO:0005506">
    <property type="term" value="F:iron ion binding"/>
    <property type="evidence" value="ECO:0007669"/>
    <property type="project" value="UniProtKB-UniRule"/>
</dbReference>
<dbReference type="GO" id="GO:0061711">
    <property type="term" value="F:N(6)-L-threonylcarbamoyladenine synthase activity"/>
    <property type="evidence" value="ECO:0007669"/>
    <property type="project" value="UniProtKB-EC"/>
</dbReference>
<dbReference type="GO" id="GO:0002949">
    <property type="term" value="P:tRNA threonylcarbamoyladenosine modification"/>
    <property type="evidence" value="ECO:0007669"/>
    <property type="project" value="UniProtKB-UniRule"/>
</dbReference>
<dbReference type="CDD" id="cd24133">
    <property type="entry name" value="ASKHA_NBD_TsaD_bac"/>
    <property type="match status" value="1"/>
</dbReference>
<dbReference type="FunFam" id="3.30.420.40:FF:000031">
    <property type="entry name" value="tRNA N6-adenosine threonylcarbamoyltransferase"/>
    <property type="match status" value="1"/>
</dbReference>
<dbReference type="Gene3D" id="3.30.420.40">
    <property type="match status" value="2"/>
</dbReference>
<dbReference type="HAMAP" id="MF_01445">
    <property type="entry name" value="TsaD"/>
    <property type="match status" value="1"/>
</dbReference>
<dbReference type="InterPro" id="IPR043129">
    <property type="entry name" value="ATPase_NBD"/>
</dbReference>
<dbReference type="InterPro" id="IPR000905">
    <property type="entry name" value="Gcp-like_dom"/>
</dbReference>
<dbReference type="InterPro" id="IPR017861">
    <property type="entry name" value="KAE1/TsaD"/>
</dbReference>
<dbReference type="InterPro" id="IPR017860">
    <property type="entry name" value="Peptidase_M22_CS"/>
</dbReference>
<dbReference type="InterPro" id="IPR022450">
    <property type="entry name" value="TsaD"/>
</dbReference>
<dbReference type="NCBIfam" id="TIGR00329">
    <property type="entry name" value="gcp_kae1"/>
    <property type="match status" value="1"/>
</dbReference>
<dbReference type="NCBIfam" id="TIGR03723">
    <property type="entry name" value="T6A_TsaD_YgjD"/>
    <property type="match status" value="1"/>
</dbReference>
<dbReference type="PANTHER" id="PTHR11735">
    <property type="entry name" value="TRNA N6-ADENOSINE THREONYLCARBAMOYLTRANSFERASE"/>
    <property type="match status" value="1"/>
</dbReference>
<dbReference type="PANTHER" id="PTHR11735:SF6">
    <property type="entry name" value="TRNA N6-ADENOSINE THREONYLCARBAMOYLTRANSFERASE, MITOCHONDRIAL"/>
    <property type="match status" value="1"/>
</dbReference>
<dbReference type="Pfam" id="PF00814">
    <property type="entry name" value="TsaD"/>
    <property type="match status" value="1"/>
</dbReference>
<dbReference type="PRINTS" id="PR00789">
    <property type="entry name" value="OSIALOPTASE"/>
</dbReference>
<dbReference type="SUPFAM" id="SSF53067">
    <property type="entry name" value="Actin-like ATPase domain"/>
    <property type="match status" value="2"/>
</dbReference>
<dbReference type="PROSITE" id="PS01016">
    <property type="entry name" value="GLYCOPROTEASE"/>
    <property type="match status" value="1"/>
</dbReference>
<sequence length="337" mass="36087">MRVLGIETSCDETGVAVYDDEQGLLSHTLYSQVKLHADYGGVVPELASRDHVRKIVPLVKQALADANCTLDDIDGVAYTKGPGLVGALLVGACMGRALAYSWGKPAVGVHHMEGHLLAPMLEDDVPEFPFLALLVSGGHSMLVGVEGIGQYEVLGESVDDAAGEAFDKTAKLMGLDYPGGPRLSKLAAKGETGHYRFPRPMTDRPGLDFSFSGLKTFAANTIAKEPDDEQTRANIARAFEEAVVDTLSIKCRRALKQTGYKRLVVAGGVSANTRLRTTLAETMQAQGGQVYYPRGEFCTDNGAMIAYAGLQRLKAGHIEDLGVKGEPRWPLDTLPAV</sequence>
<reference key="1">
    <citation type="submission" date="2007-08" db="EMBL/GenBank/DDBJ databases">
        <title>Complete sequence of Shewanella sediminis HAW-EB3.</title>
        <authorList>
            <consortium name="US DOE Joint Genome Institute"/>
            <person name="Copeland A."/>
            <person name="Lucas S."/>
            <person name="Lapidus A."/>
            <person name="Barry K."/>
            <person name="Glavina del Rio T."/>
            <person name="Dalin E."/>
            <person name="Tice H."/>
            <person name="Pitluck S."/>
            <person name="Chertkov O."/>
            <person name="Brettin T."/>
            <person name="Bruce D."/>
            <person name="Detter J.C."/>
            <person name="Han C."/>
            <person name="Schmutz J."/>
            <person name="Larimer F."/>
            <person name="Land M."/>
            <person name="Hauser L."/>
            <person name="Kyrpides N."/>
            <person name="Kim E."/>
            <person name="Zhao J.-S."/>
            <person name="Richardson P."/>
        </authorList>
    </citation>
    <scope>NUCLEOTIDE SEQUENCE [LARGE SCALE GENOMIC DNA]</scope>
    <source>
        <strain>HAW-EB3</strain>
    </source>
</reference>
<feature type="chain" id="PRO_1000087491" description="tRNA N6-adenosine threonylcarbamoyltransferase">
    <location>
        <begin position="1"/>
        <end position="337"/>
    </location>
</feature>
<feature type="binding site" evidence="1">
    <location>
        <position position="111"/>
    </location>
    <ligand>
        <name>Fe cation</name>
        <dbReference type="ChEBI" id="CHEBI:24875"/>
    </ligand>
</feature>
<feature type="binding site" evidence="1">
    <location>
        <position position="115"/>
    </location>
    <ligand>
        <name>Fe cation</name>
        <dbReference type="ChEBI" id="CHEBI:24875"/>
    </ligand>
</feature>
<feature type="binding site" evidence="1">
    <location>
        <begin position="134"/>
        <end position="138"/>
    </location>
    <ligand>
        <name>substrate</name>
    </ligand>
</feature>
<feature type="binding site" evidence="1">
    <location>
        <position position="167"/>
    </location>
    <ligand>
        <name>substrate</name>
    </ligand>
</feature>
<feature type="binding site" evidence="1">
    <location>
        <position position="180"/>
    </location>
    <ligand>
        <name>substrate</name>
    </ligand>
</feature>
<feature type="binding site" evidence="1">
    <location>
        <position position="272"/>
    </location>
    <ligand>
        <name>substrate</name>
    </ligand>
</feature>
<feature type="binding site" evidence="1">
    <location>
        <position position="300"/>
    </location>
    <ligand>
        <name>Fe cation</name>
        <dbReference type="ChEBI" id="CHEBI:24875"/>
    </ligand>
</feature>
<gene>
    <name evidence="1" type="primary">tsaD</name>
    <name type="synonym">gcp</name>
    <name type="ordered locus">Ssed_1076</name>
</gene>
<evidence type="ECO:0000255" key="1">
    <source>
        <dbReference type="HAMAP-Rule" id="MF_01445"/>
    </source>
</evidence>
<proteinExistence type="inferred from homology"/>